<sequence length="116" mass="13168">MHEITLCQRALELIEQQAAKHGAKRVTGVWLKIGAFSCVETSSLAFCFDLVCRGSVAEGCKLHLEEQEAECWCETCQQYVTLLTQRVRRCPQCHGDMLQIVADDGLQIRRIEIDQE</sequence>
<dbReference type="EMBL" id="AE005674">
    <property type="protein sequence ID" value="AAN44234.1"/>
    <property type="status" value="ALT_INIT"/>
    <property type="molecule type" value="Genomic_DNA"/>
</dbReference>
<dbReference type="EMBL" id="AE014073">
    <property type="protein sequence ID" value="AAP18061.1"/>
    <property type="status" value="ALT_INIT"/>
    <property type="molecule type" value="Genomic_DNA"/>
</dbReference>
<dbReference type="RefSeq" id="NP_708527.1">
    <property type="nucleotide sequence ID" value="NC_004337.2"/>
</dbReference>
<dbReference type="RefSeq" id="WP_001299100.1">
    <property type="nucleotide sequence ID" value="NZ_WPGW01000014.1"/>
</dbReference>
<dbReference type="SMR" id="P0A702"/>
<dbReference type="STRING" id="198214.SF2743"/>
<dbReference type="PaxDb" id="198214-SF2743"/>
<dbReference type="GeneID" id="1025706"/>
<dbReference type="GeneID" id="93779282"/>
<dbReference type="KEGG" id="sfl:SF2743"/>
<dbReference type="KEGG" id="sfx:S2935"/>
<dbReference type="PATRIC" id="fig|198214.7.peg.3266"/>
<dbReference type="HOGENOM" id="CLU_126929_0_0_6"/>
<dbReference type="Proteomes" id="UP000001006">
    <property type="component" value="Chromosome"/>
</dbReference>
<dbReference type="Proteomes" id="UP000002673">
    <property type="component" value="Chromosome"/>
</dbReference>
<dbReference type="GO" id="GO:0016151">
    <property type="term" value="F:nickel cation binding"/>
    <property type="evidence" value="ECO:0007669"/>
    <property type="project" value="UniProtKB-UniRule"/>
</dbReference>
<dbReference type="GO" id="GO:0008270">
    <property type="term" value="F:zinc ion binding"/>
    <property type="evidence" value="ECO:0007669"/>
    <property type="project" value="UniProtKB-UniRule"/>
</dbReference>
<dbReference type="GO" id="GO:0051604">
    <property type="term" value="P:protein maturation"/>
    <property type="evidence" value="ECO:0007669"/>
    <property type="project" value="InterPro"/>
</dbReference>
<dbReference type="GO" id="GO:0036211">
    <property type="term" value="P:protein modification process"/>
    <property type="evidence" value="ECO:0007669"/>
    <property type="project" value="UniProtKB-UniRule"/>
</dbReference>
<dbReference type="FunFam" id="3.30.2320.80:FF:000001">
    <property type="entry name" value="Hydrogenase maturation factor HypA"/>
    <property type="match status" value="1"/>
</dbReference>
<dbReference type="Gene3D" id="3.30.2320.80">
    <property type="match status" value="1"/>
</dbReference>
<dbReference type="HAMAP" id="MF_00213">
    <property type="entry name" value="HypA_HybF"/>
    <property type="match status" value="1"/>
</dbReference>
<dbReference type="InterPro" id="IPR020538">
    <property type="entry name" value="Hydgase_Ni_incorp_HypA/HybF_CS"/>
</dbReference>
<dbReference type="InterPro" id="IPR000688">
    <property type="entry name" value="HypA/HybF"/>
</dbReference>
<dbReference type="NCBIfam" id="TIGR00100">
    <property type="entry name" value="hypA"/>
    <property type="match status" value="1"/>
</dbReference>
<dbReference type="NCBIfam" id="NF002979">
    <property type="entry name" value="PRK03681.1"/>
    <property type="match status" value="1"/>
</dbReference>
<dbReference type="NCBIfam" id="NF009046">
    <property type="entry name" value="PRK12380.1"/>
    <property type="match status" value="1"/>
</dbReference>
<dbReference type="PANTHER" id="PTHR34535">
    <property type="entry name" value="HYDROGENASE MATURATION FACTOR HYPA"/>
    <property type="match status" value="1"/>
</dbReference>
<dbReference type="PANTHER" id="PTHR34535:SF3">
    <property type="entry name" value="HYDROGENASE MATURATION FACTOR HYPA"/>
    <property type="match status" value="1"/>
</dbReference>
<dbReference type="Pfam" id="PF01155">
    <property type="entry name" value="HypA"/>
    <property type="match status" value="1"/>
</dbReference>
<dbReference type="PIRSF" id="PIRSF004761">
    <property type="entry name" value="Hydrgn_mat_HypA"/>
    <property type="match status" value="1"/>
</dbReference>
<dbReference type="PROSITE" id="PS01249">
    <property type="entry name" value="HYPA"/>
    <property type="match status" value="1"/>
</dbReference>
<reference key="1">
    <citation type="journal article" date="2002" name="Nucleic Acids Res.">
        <title>Genome sequence of Shigella flexneri 2a: insights into pathogenicity through comparison with genomes of Escherichia coli K12 and O157.</title>
        <authorList>
            <person name="Jin Q."/>
            <person name="Yuan Z."/>
            <person name="Xu J."/>
            <person name="Wang Y."/>
            <person name="Shen Y."/>
            <person name="Lu W."/>
            <person name="Wang J."/>
            <person name="Liu H."/>
            <person name="Yang J."/>
            <person name="Yang F."/>
            <person name="Zhang X."/>
            <person name="Zhang J."/>
            <person name="Yang G."/>
            <person name="Wu H."/>
            <person name="Qu D."/>
            <person name="Dong J."/>
            <person name="Sun L."/>
            <person name="Xue Y."/>
            <person name="Zhao A."/>
            <person name="Gao Y."/>
            <person name="Zhu J."/>
            <person name="Kan B."/>
            <person name="Ding K."/>
            <person name="Chen S."/>
            <person name="Cheng H."/>
            <person name="Yao Z."/>
            <person name="He B."/>
            <person name="Chen R."/>
            <person name="Ma D."/>
            <person name="Qiang B."/>
            <person name="Wen Y."/>
            <person name="Hou Y."/>
            <person name="Yu J."/>
        </authorList>
    </citation>
    <scope>NUCLEOTIDE SEQUENCE [LARGE SCALE GENOMIC DNA]</scope>
    <source>
        <strain>301 / Serotype 2a</strain>
    </source>
</reference>
<reference key="2">
    <citation type="journal article" date="2003" name="Infect. Immun.">
        <title>Complete genome sequence and comparative genomics of Shigella flexneri serotype 2a strain 2457T.</title>
        <authorList>
            <person name="Wei J."/>
            <person name="Goldberg M.B."/>
            <person name="Burland V."/>
            <person name="Venkatesan M.M."/>
            <person name="Deng W."/>
            <person name="Fournier G."/>
            <person name="Mayhew G.F."/>
            <person name="Plunkett G. III"/>
            <person name="Rose D.J."/>
            <person name="Darling A."/>
            <person name="Mau B."/>
            <person name="Perna N.T."/>
            <person name="Payne S.M."/>
            <person name="Runyen-Janecky L.J."/>
            <person name="Zhou S."/>
            <person name="Schwartz D.C."/>
            <person name="Blattner F.R."/>
        </authorList>
    </citation>
    <scope>NUCLEOTIDE SEQUENCE [LARGE SCALE GENOMIC DNA]</scope>
    <source>
        <strain>ATCC 700930 / 2457T / Serotype 2a</strain>
    </source>
</reference>
<comment type="function">
    <text evidence="1">Involved in the maturation of [NiFe] hydrogenases. Required for nickel insertion into the metal center of the hydrogenase.</text>
</comment>
<comment type="similarity">
    <text evidence="1 2">Belongs to the HypA/HybF family.</text>
</comment>
<comment type="sequence caution" evidence="2">
    <conflict type="erroneous initiation">
        <sequence resource="EMBL-CDS" id="AAN44234"/>
    </conflict>
</comment>
<comment type="sequence caution" evidence="2">
    <conflict type="erroneous initiation">
        <sequence resource="EMBL-CDS" id="AAP18061"/>
    </conflict>
</comment>
<organism>
    <name type="scientific">Shigella flexneri</name>
    <dbReference type="NCBI Taxonomy" id="623"/>
    <lineage>
        <taxon>Bacteria</taxon>
        <taxon>Pseudomonadati</taxon>
        <taxon>Pseudomonadota</taxon>
        <taxon>Gammaproteobacteria</taxon>
        <taxon>Enterobacterales</taxon>
        <taxon>Enterobacteriaceae</taxon>
        <taxon>Shigella</taxon>
    </lineage>
</organism>
<gene>
    <name evidence="1" type="primary">hypA</name>
    <name type="ordered locus">SF2743</name>
    <name type="ordered locus">S2935</name>
</gene>
<feature type="chain" id="PRO_0000129062" description="Hydrogenase maturation factor HypA">
    <location>
        <begin position="1"/>
        <end position="116"/>
    </location>
</feature>
<feature type="binding site" evidence="1">
    <location>
        <position position="2"/>
    </location>
    <ligand>
        <name>Ni(2+)</name>
        <dbReference type="ChEBI" id="CHEBI:49786"/>
    </ligand>
</feature>
<feature type="binding site" evidence="1">
    <location>
        <position position="73"/>
    </location>
    <ligand>
        <name>Zn(2+)</name>
        <dbReference type="ChEBI" id="CHEBI:29105"/>
    </ligand>
</feature>
<feature type="binding site" evidence="1">
    <location>
        <position position="76"/>
    </location>
    <ligand>
        <name>Zn(2+)</name>
        <dbReference type="ChEBI" id="CHEBI:29105"/>
    </ligand>
</feature>
<feature type="binding site" evidence="1">
    <location>
        <position position="90"/>
    </location>
    <ligand>
        <name>Zn(2+)</name>
        <dbReference type="ChEBI" id="CHEBI:29105"/>
    </ligand>
</feature>
<feature type="binding site" evidence="1">
    <location>
        <position position="93"/>
    </location>
    <ligand>
        <name>Zn(2+)</name>
        <dbReference type="ChEBI" id="CHEBI:29105"/>
    </ligand>
</feature>
<name>HYPA_SHIFL</name>
<proteinExistence type="inferred from homology"/>
<protein>
    <recommendedName>
        <fullName evidence="1">Hydrogenase maturation factor HypA</fullName>
    </recommendedName>
</protein>
<keyword id="KW-0479">Metal-binding</keyword>
<keyword id="KW-0533">Nickel</keyword>
<keyword id="KW-1185">Reference proteome</keyword>
<keyword id="KW-0862">Zinc</keyword>
<evidence type="ECO:0000255" key="1">
    <source>
        <dbReference type="HAMAP-Rule" id="MF_00213"/>
    </source>
</evidence>
<evidence type="ECO:0000305" key="2"/>
<accession>P0A702</accession>
<accession>P24189</accession>